<feature type="chain" id="PRO_1000009438" description="Leucine--tRNA ligase">
    <location>
        <begin position="1"/>
        <end position="805"/>
    </location>
</feature>
<feature type="short sequence motif" description="'HIGH' region">
    <location>
        <begin position="41"/>
        <end position="52"/>
    </location>
</feature>
<feature type="short sequence motif" description="'KMSKS' region">
    <location>
        <begin position="577"/>
        <end position="581"/>
    </location>
</feature>
<feature type="binding site" evidence="1">
    <location>
        <position position="580"/>
    </location>
    <ligand>
        <name>ATP</name>
        <dbReference type="ChEBI" id="CHEBI:30616"/>
    </ligand>
</feature>
<organism>
    <name type="scientific">Staphylococcus aureus (strain NCTC 8325 / PS 47)</name>
    <dbReference type="NCBI Taxonomy" id="93061"/>
    <lineage>
        <taxon>Bacteria</taxon>
        <taxon>Bacillati</taxon>
        <taxon>Bacillota</taxon>
        <taxon>Bacilli</taxon>
        <taxon>Bacillales</taxon>
        <taxon>Staphylococcaceae</taxon>
        <taxon>Staphylococcus</taxon>
    </lineage>
</organism>
<sequence length="805" mass="91786">MLNYNHNQIEKKWQDYWDENKTFKTNDNLGQKKFYALDMFPYPSGAGLHVGHPEGYTATDIISRYKRMQGYNVLHPMGWDAFGLPAEQYALDTGNDPREFTKKNIQTFKRQIKELGFSYDWDREVNTTDPEYYKWTQWIFIQLYNKGLAYVDEVAVNWCPALGTVLSNEEVIDGVSERGGHPVYRKPMKQWVLKITEYADQLLADLDDLDWPESLKDMQRNWIGRSEGAKVSFDVDNTEGKVEVFTTRPDTIYGASFLVLSPEHALVNSITTDEYKEKVKAYQTEASKKSDLERTDLAKDKSGVFTGAYATNPLSGEKVQIWIADYVLSTYGTGAIMAVPAHDDRDYEFAKKFDLPIIEVIEGGNVEEAAYTGEGKHINSGELDGLENEAAITKAIQLLEQKGAGEKKVNYKLRDWLFSRQRYWGEPIPVIHWEDGTMTTVPEEELPLLLPETDEIKPSGTGESPLANIDSFVNVVDEKTGMKGRRETNTMPQWAGSCWYYLRYIDPKNENMLADPEKLKHWLPVDLYIGGVEHAVLHLLYARFWHKVLYDLAIVPTKEPFQKLFNQGMILGEGNEKMSKSKGNVINPDDIVQSHGADTLRLYEMFMGPLDAAIAWSEKGLDGSRRFLDRVWRLMVNEDGTLSSKIVTTNNKSLDKVYNQTVKKVTEDFETLGFNTAISQLMVFINECYKVDEVYKPYIEGFVKMLAPIAPHIGEELWSKLGHEESITYQPWPTYDEALLVDDEVEIVVQVNGKLRAKIKIAKDTSKEEMQEIALSNDNVKASIEGKDIMKVIAVPQKLVNIVAK</sequence>
<reference key="1">
    <citation type="book" date="2006" name="Gram positive pathogens, 2nd edition">
        <title>The Staphylococcus aureus NCTC 8325 genome.</title>
        <editorList>
            <person name="Fischetti V."/>
            <person name="Novick R."/>
            <person name="Ferretti J."/>
            <person name="Portnoy D."/>
            <person name="Rood J."/>
        </editorList>
        <authorList>
            <person name="Gillaspy A.F."/>
            <person name="Worrell V."/>
            <person name="Orvis J."/>
            <person name="Roe B.A."/>
            <person name="Dyer D.W."/>
            <person name="Iandolo J.J."/>
        </authorList>
    </citation>
    <scope>NUCLEOTIDE SEQUENCE [LARGE SCALE GENOMIC DNA]</scope>
    <source>
        <strain>NCTC 8325 / PS 47</strain>
    </source>
</reference>
<comment type="catalytic activity">
    <reaction evidence="1">
        <text>tRNA(Leu) + L-leucine + ATP = L-leucyl-tRNA(Leu) + AMP + diphosphate</text>
        <dbReference type="Rhea" id="RHEA:11688"/>
        <dbReference type="Rhea" id="RHEA-COMP:9613"/>
        <dbReference type="Rhea" id="RHEA-COMP:9622"/>
        <dbReference type="ChEBI" id="CHEBI:30616"/>
        <dbReference type="ChEBI" id="CHEBI:33019"/>
        <dbReference type="ChEBI" id="CHEBI:57427"/>
        <dbReference type="ChEBI" id="CHEBI:78442"/>
        <dbReference type="ChEBI" id="CHEBI:78494"/>
        <dbReference type="ChEBI" id="CHEBI:456215"/>
        <dbReference type="EC" id="6.1.1.4"/>
    </reaction>
</comment>
<comment type="subcellular location">
    <subcellularLocation>
        <location evidence="1">Cytoplasm</location>
    </subcellularLocation>
</comment>
<comment type="similarity">
    <text evidence="1">Belongs to the class-I aminoacyl-tRNA synthetase family.</text>
</comment>
<proteinExistence type="inferred from homology"/>
<keyword id="KW-0030">Aminoacyl-tRNA synthetase</keyword>
<keyword id="KW-0067">ATP-binding</keyword>
<keyword id="KW-0963">Cytoplasm</keyword>
<keyword id="KW-0436">Ligase</keyword>
<keyword id="KW-0547">Nucleotide-binding</keyword>
<keyword id="KW-0648">Protein biosynthesis</keyword>
<keyword id="KW-1185">Reference proteome</keyword>
<gene>
    <name evidence="1" type="primary">leuS</name>
    <name type="ordered locus">SAOUHSC_01875</name>
</gene>
<protein>
    <recommendedName>
        <fullName evidence="1">Leucine--tRNA ligase</fullName>
        <ecNumber evidence="1">6.1.1.4</ecNumber>
    </recommendedName>
    <alternativeName>
        <fullName evidence="1">Leucyl-tRNA synthetase</fullName>
        <shortName evidence="1">LeuRS</shortName>
    </alternativeName>
</protein>
<accession>Q2FXH2</accession>
<dbReference type="EC" id="6.1.1.4" evidence="1"/>
<dbReference type="EMBL" id="CP000253">
    <property type="protein sequence ID" value="ABD30940.1"/>
    <property type="molecule type" value="Genomic_DNA"/>
</dbReference>
<dbReference type="RefSeq" id="WP_001549041.1">
    <property type="nucleotide sequence ID" value="NZ_LS483365.1"/>
</dbReference>
<dbReference type="RefSeq" id="YP_500378.1">
    <property type="nucleotide sequence ID" value="NC_007795.1"/>
</dbReference>
<dbReference type="SMR" id="Q2FXH2"/>
<dbReference type="STRING" id="93061.SAOUHSC_01875"/>
<dbReference type="BindingDB" id="Q2FXH2"/>
<dbReference type="ChEMBL" id="CHEMBL4295595"/>
<dbReference type="PaxDb" id="1280-SAXN108_1789"/>
<dbReference type="GeneID" id="3921764"/>
<dbReference type="KEGG" id="sao:SAOUHSC_01875"/>
<dbReference type="PATRIC" id="fig|93061.5.peg.1707"/>
<dbReference type="eggNOG" id="COG0495">
    <property type="taxonomic scope" value="Bacteria"/>
</dbReference>
<dbReference type="HOGENOM" id="CLU_004427_0_0_9"/>
<dbReference type="OrthoDB" id="9810365at2"/>
<dbReference type="Proteomes" id="UP000008816">
    <property type="component" value="Chromosome"/>
</dbReference>
<dbReference type="GO" id="GO:0005829">
    <property type="term" value="C:cytosol"/>
    <property type="evidence" value="ECO:0000318"/>
    <property type="project" value="GO_Central"/>
</dbReference>
<dbReference type="GO" id="GO:0002161">
    <property type="term" value="F:aminoacyl-tRNA deacylase activity"/>
    <property type="evidence" value="ECO:0007669"/>
    <property type="project" value="InterPro"/>
</dbReference>
<dbReference type="GO" id="GO:0005524">
    <property type="term" value="F:ATP binding"/>
    <property type="evidence" value="ECO:0007669"/>
    <property type="project" value="UniProtKB-UniRule"/>
</dbReference>
<dbReference type="GO" id="GO:0004823">
    <property type="term" value="F:leucine-tRNA ligase activity"/>
    <property type="evidence" value="ECO:0000318"/>
    <property type="project" value="GO_Central"/>
</dbReference>
<dbReference type="GO" id="GO:0006429">
    <property type="term" value="P:leucyl-tRNA aminoacylation"/>
    <property type="evidence" value="ECO:0000318"/>
    <property type="project" value="GO_Central"/>
</dbReference>
<dbReference type="CDD" id="cd07958">
    <property type="entry name" value="Anticodon_Ia_Leu_BEm"/>
    <property type="match status" value="1"/>
</dbReference>
<dbReference type="CDD" id="cd00812">
    <property type="entry name" value="LeuRS_core"/>
    <property type="match status" value="1"/>
</dbReference>
<dbReference type="FunFam" id="1.10.730.10:FF:000012">
    <property type="entry name" value="Leucine--tRNA ligase"/>
    <property type="match status" value="1"/>
</dbReference>
<dbReference type="FunFam" id="1.10.730.10:FF:000018">
    <property type="entry name" value="Leucine--tRNA ligase"/>
    <property type="match status" value="1"/>
</dbReference>
<dbReference type="FunFam" id="3.10.20.590:FF:000001">
    <property type="entry name" value="Leucine--tRNA ligase"/>
    <property type="match status" value="1"/>
</dbReference>
<dbReference type="FunFam" id="3.40.50.620:FF:000056">
    <property type="entry name" value="Leucine--tRNA ligase"/>
    <property type="match status" value="1"/>
</dbReference>
<dbReference type="FunFam" id="3.40.50.620:FF:000077">
    <property type="entry name" value="Leucine--tRNA ligase"/>
    <property type="match status" value="1"/>
</dbReference>
<dbReference type="Gene3D" id="3.10.20.590">
    <property type="match status" value="1"/>
</dbReference>
<dbReference type="Gene3D" id="3.40.50.620">
    <property type="entry name" value="HUPs"/>
    <property type="match status" value="2"/>
</dbReference>
<dbReference type="Gene3D" id="1.10.730.10">
    <property type="entry name" value="Isoleucyl-tRNA Synthetase, Domain 1"/>
    <property type="match status" value="1"/>
</dbReference>
<dbReference type="HAMAP" id="MF_00049_B">
    <property type="entry name" value="Leu_tRNA_synth_B"/>
    <property type="match status" value="1"/>
</dbReference>
<dbReference type="InterPro" id="IPR001412">
    <property type="entry name" value="aa-tRNA-synth_I_CS"/>
</dbReference>
<dbReference type="InterPro" id="IPR002300">
    <property type="entry name" value="aa-tRNA-synth_Ia"/>
</dbReference>
<dbReference type="InterPro" id="IPR002302">
    <property type="entry name" value="Leu-tRNA-ligase"/>
</dbReference>
<dbReference type="InterPro" id="IPR025709">
    <property type="entry name" value="Leu_tRNA-synth_edit"/>
</dbReference>
<dbReference type="InterPro" id="IPR013155">
    <property type="entry name" value="M/V/L/I-tRNA-synth_anticd-bd"/>
</dbReference>
<dbReference type="InterPro" id="IPR015413">
    <property type="entry name" value="Methionyl/Leucyl_tRNA_Synth"/>
</dbReference>
<dbReference type="InterPro" id="IPR014729">
    <property type="entry name" value="Rossmann-like_a/b/a_fold"/>
</dbReference>
<dbReference type="InterPro" id="IPR009080">
    <property type="entry name" value="tRNAsynth_Ia_anticodon-bd"/>
</dbReference>
<dbReference type="InterPro" id="IPR009008">
    <property type="entry name" value="Val/Leu/Ile-tRNA-synth_edit"/>
</dbReference>
<dbReference type="NCBIfam" id="TIGR00396">
    <property type="entry name" value="leuS_bact"/>
    <property type="match status" value="1"/>
</dbReference>
<dbReference type="PANTHER" id="PTHR43740:SF2">
    <property type="entry name" value="LEUCINE--TRNA LIGASE, MITOCHONDRIAL"/>
    <property type="match status" value="1"/>
</dbReference>
<dbReference type="PANTHER" id="PTHR43740">
    <property type="entry name" value="LEUCYL-TRNA SYNTHETASE"/>
    <property type="match status" value="1"/>
</dbReference>
<dbReference type="Pfam" id="PF08264">
    <property type="entry name" value="Anticodon_1"/>
    <property type="match status" value="1"/>
</dbReference>
<dbReference type="Pfam" id="PF00133">
    <property type="entry name" value="tRNA-synt_1"/>
    <property type="match status" value="1"/>
</dbReference>
<dbReference type="Pfam" id="PF13603">
    <property type="entry name" value="tRNA-synt_1_2"/>
    <property type="match status" value="1"/>
</dbReference>
<dbReference type="Pfam" id="PF09334">
    <property type="entry name" value="tRNA-synt_1g"/>
    <property type="match status" value="1"/>
</dbReference>
<dbReference type="PRINTS" id="PR00985">
    <property type="entry name" value="TRNASYNTHLEU"/>
</dbReference>
<dbReference type="SUPFAM" id="SSF47323">
    <property type="entry name" value="Anticodon-binding domain of a subclass of class I aminoacyl-tRNA synthetases"/>
    <property type="match status" value="1"/>
</dbReference>
<dbReference type="SUPFAM" id="SSF52374">
    <property type="entry name" value="Nucleotidylyl transferase"/>
    <property type="match status" value="1"/>
</dbReference>
<dbReference type="SUPFAM" id="SSF50677">
    <property type="entry name" value="ValRS/IleRS/LeuRS editing domain"/>
    <property type="match status" value="1"/>
</dbReference>
<dbReference type="PROSITE" id="PS00178">
    <property type="entry name" value="AA_TRNA_LIGASE_I"/>
    <property type="match status" value="1"/>
</dbReference>
<name>SYL_STAA8</name>
<evidence type="ECO:0000255" key="1">
    <source>
        <dbReference type="HAMAP-Rule" id="MF_00049"/>
    </source>
</evidence>